<reference key="1">
    <citation type="journal article" date="1988" name="FEBS Lett.">
        <title>Primary structure of rat brain sodium channel III deduced from the cDNA sequence.</title>
        <authorList>
            <person name="Kayano T."/>
            <person name="Noda M."/>
            <person name="Flockerzi V."/>
            <person name="Takahashi H."/>
            <person name="Numa S."/>
        </authorList>
    </citation>
    <scope>NUCLEOTIDE SEQUENCE [MRNA]</scope>
    <source>
        <strain>Wistar</strain>
    </source>
</reference>
<reference key="2">
    <citation type="journal article" date="2010" name="Biochem. J.">
        <title>Molecular determination of selectivity of the site 3 modulator (BmK I) to sodium channels in the CNS: a clue to the importance of Nav1.6 in BmK I-induced neuronal hyperexcitability.</title>
        <authorList>
            <person name="He H."/>
            <person name="Liu Z."/>
            <person name="Dong B."/>
            <person name="Zhou J."/>
            <person name="Zhu H."/>
            <person name="Ji Y."/>
        </authorList>
    </citation>
    <scope>INTERACTION WITH SCORPION TOXIN BMK M1</scope>
    <scope>MUTAGENESIS OF GLU-1559</scope>
</reference>
<reference key="3">
    <citation type="journal article" date="2012" name="Nat. Commun.">
        <title>Quantitative maps of protein phosphorylation sites across 14 different rat organs and tissues.</title>
        <authorList>
            <person name="Lundby A."/>
            <person name="Secher A."/>
            <person name="Lage K."/>
            <person name="Nordsborg N.B."/>
            <person name="Dmytriyev A."/>
            <person name="Lundby C."/>
            <person name="Olsen J.V."/>
        </authorList>
    </citation>
    <scope>PHOSPHORYLATION [LARGE SCALE ANALYSIS] AT SER-484; SER-485 AND SER-486</scope>
    <scope>IDENTIFICATION BY MASS SPECTROMETRY [LARGE SCALE ANALYSIS]</scope>
</reference>
<reference key="4">
    <citation type="journal article" date="2014" name="Proc. Natl. Acad. Sci. U.S.A.">
        <title>A disulfide tether stabilizes the block of sodium channels by the conotoxin muO[section sign]-GVIIJ.</title>
        <authorList>
            <person name="Gajewiak J."/>
            <person name="Azam L."/>
            <person name="Imperial J."/>
            <person name="Walewska A."/>
            <person name="Green B.R."/>
            <person name="Bandyopadhyay P.K."/>
            <person name="Raghuraman S."/>
            <person name="Ueberheide B."/>
            <person name="Bern M."/>
            <person name="Zhou H.M."/>
            <person name="Minassian N.A."/>
            <person name="Hagan R.H."/>
            <person name="Flinspach M."/>
            <person name="Liu Y."/>
            <person name="Bulaj G."/>
            <person name="Wickenden A.D."/>
            <person name="Olivera B.M."/>
            <person name="Yoshikami D."/>
            <person name="Zhang M.M."/>
        </authorList>
    </citation>
    <scope>SUBUNIT</scope>
    <scope>INTERACTION WITH THE CONOTOXIN GVIIJ</scope>
</reference>
<reference key="5">
    <citation type="journal article" date="2015" name="Sci. Rep.">
        <title>Synergetic action of domain II and IV underlies persistent current generation in Nav1.3 as revealed by a tarantula toxin.</title>
        <authorList>
            <person name="Tang C."/>
            <person name="Zhou X."/>
            <person name="Zhang Y."/>
            <person name="Xiao Z."/>
            <person name="Hu Z."/>
            <person name="Zhang C."/>
            <person name="Huang Y."/>
            <person name="Chen B."/>
            <person name="Liu Z."/>
            <person name="Liang S."/>
        </authorList>
    </citation>
    <scope>FUNCTION</scope>
    <scope>TRANSPORTER ACTIVITY</scope>
    <scope>SUBUNIT</scope>
    <scope>INTERACTION WITH THE SPIDER RTX-VII TOXIN</scope>
    <scope>MUTAGENESIS OF LYS-1503; TYR-1504; MET-1505; THR-1506; LEU-1507 AND GLU-1562</scope>
</reference>
<reference key="6">
    <citation type="journal article" date="2017" name="Sci. Rep.">
        <title>The tarantula toxin beta/delta-TRTX-Pre1a highlights the importance of the S1-S2 voltage-sensor region for sodium channel subtype selectivity.</title>
        <authorList>
            <person name="Wingerd J.S."/>
            <person name="Mozar C.A."/>
            <person name="Ussing C.A."/>
            <person name="Murali S.S."/>
            <person name="Chin Y.K."/>
            <person name="Cristofori-Armstrong B."/>
            <person name="Durek T."/>
            <person name="Gilchrist J."/>
            <person name="Vaughan C.W."/>
            <person name="Bosmans F."/>
            <person name="Adams D.J."/>
            <person name="Lewis R.J."/>
            <person name="Alewood P.F."/>
            <person name="Mobli M."/>
            <person name="Christie M.J."/>
            <person name="Rash L.D."/>
        </authorList>
    </citation>
    <scope>SUBUNIT</scope>
    <scope>INTERACTION WITH THE SPIDER BETA/DELTA-THERAPHOTOXIN-PRE1A</scope>
    <scope>SITE SER-1510</scope>
</reference>
<gene>
    <name evidence="13" type="primary">Scn3a</name>
</gene>
<feature type="chain" id="PRO_0000048494" description="Sodium channel protein type 3 subunit alpha">
    <location>
        <begin position="1"/>
        <end position="1951"/>
    </location>
</feature>
<feature type="topological domain" description="Cytoplasmic" evidence="11">
    <location>
        <begin position="1"/>
        <end position="128"/>
    </location>
</feature>
<feature type="transmembrane region" description="Helical; Name=S1 of repeat I" evidence="4">
    <location>
        <begin position="129"/>
        <end position="146"/>
    </location>
</feature>
<feature type="topological domain" description="Extracellular" evidence="11">
    <location>
        <begin position="147"/>
        <end position="152"/>
    </location>
</feature>
<feature type="transmembrane region" description="Helical; Name=S2 of repeat I" evidence="4">
    <location>
        <begin position="153"/>
        <end position="174"/>
    </location>
</feature>
<feature type="topological domain" description="Cytoplasmic" evidence="11">
    <location>
        <begin position="175"/>
        <end position="188"/>
    </location>
</feature>
<feature type="transmembrane region" description="Helical; Name=S3 of repeat I" evidence="4">
    <location>
        <begin position="189"/>
        <end position="206"/>
    </location>
</feature>
<feature type="topological domain" description="Extracellular" evidence="11">
    <location>
        <begin position="207"/>
        <end position="213"/>
    </location>
</feature>
<feature type="transmembrane region" description="Helical; Name=S4 of repeat I" evidence="4">
    <location>
        <begin position="214"/>
        <end position="235"/>
    </location>
</feature>
<feature type="topological domain" description="Cytoplasmic" evidence="11">
    <location>
        <begin position="236"/>
        <end position="249"/>
    </location>
</feature>
<feature type="transmembrane region" description="Helical; Name=S5 of repeat I" evidence="4">
    <location>
        <begin position="250"/>
        <end position="269"/>
    </location>
</feature>
<feature type="topological domain" description="Extracellular" evidence="11">
    <location>
        <begin position="270"/>
        <end position="369"/>
    </location>
</feature>
<feature type="intramembrane region" description="Pore-forming" evidence="4">
    <location>
        <begin position="370"/>
        <end position="386"/>
    </location>
</feature>
<feature type="topological domain" description="Extracellular" evidence="11">
    <location>
        <begin position="387"/>
        <end position="397"/>
    </location>
</feature>
<feature type="transmembrane region" description="Helical; Name=S6 of repeat I" evidence="4">
    <location>
        <begin position="398"/>
        <end position="424"/>
    </location>
</feature>
<feature type="topological domain" description="Cytoplasmic" evidence="11">
    <location>
        <begin position="425"/>
        <end position="712"/>
    </location>
</feature>
<feature type="transmembrane region" description="Helical; Name=S1 of repeat II" evidence="4">
    <location>
        <begin position="713"/>
        <end position="730"/>
    </location>
</feature>
<feature type="topological domain" description="Extracellular" evidence="11">
    <location>
        <begin position="731"/>
        <end position="738"/>
    </location>
</feature>
<feature type="transmembrane region" description="Helical; Name=S2 of repeat II" evidence="4">
    <location>
        <begin position="739"/>
        <end position="763"/>
    </location>
</feature>
<feature type="topological domain" description="Cytoplasmic" evidence="11">
    <location>
        <begin position="764"/>
        <end position="773"/>
    </location>
</feature>
<feature type="transmembrane region" description="Helical; Name=S3 of repeat II" evidence="4">
    <location>
        <begin position="774"/>
        <end position="793"/>
    </location>
</feature>
<feature type="topological domain" description="Extracellular" evidence="11">
    <location>
        <begin position="794"/>
        <end position="797"/>
    </location>
</feature>
<feature type="transmembrane region" description="Helical; Name=S4 of repeat II" evidence="4">
    <location>
        <begin position="798"/>
        <end position="816"/>
    </location>
</feature>
<feature type="topological domain" description="Cytoplasmic" evidence="11">
    <location>
        <begin position="817"/>
        <end position="834"/>
    </location>
</feature>
<feature type="transmembrane region" description="Helical; Name=S5 of repeat II" evidence="4">
    <location>
        <begin position="835"/>
        <end position="855"/>
    </location>
</feature>
<feature type="topological domain" description="Extracellular" evidence="11">
    <location>
        <begin position="856"/>
        <end position="880"/>
    </location>
</feature>
<feature type="intramembrane region" description="Pore-forming" evidence="4">
    <location>
        <begin position="881"/>
        <end position="896"/>
    </location>
</feature>
<feature type="topological domain" description="Extracellular" evidence="11">
    <location>
        <begin position="897"/>
        <end position="907"/>
    </location>
</feature>
<feature type="transmembrane region" description="Helical; Name=S6 of repeat II" evidence="4">
    <location>
        <begin position="908"/>
        <end position="934"/>
    </location>
</feature>
<feature type="topological domain" description="Cytoplasmic" evidence="11">
    <location>
        <begin position="935"/>
        <end position="1156"/>
    </location>
</feature>
<feature type="transmembrane region" description="Helical; Name=S1 of repeat III" evidence="4">
    <location>
        <begin position="1157"/>
        <end position="1177"/>
    </location>
</feature>
<feature type="topological domain" description="Extracellular" evidence="11">
    <location>
        <begin position="1178"/>
        <end position="1189"/>
    </location>
</feature>
<feature type="transmembrane region" description="Helical; Name=S2 of repeat III" evidence="4">
    <location>
        <begin position="1190"/>
        <end position="1211"/>
    </location>
</feature>
<feature type="topological domain" description="Cytoplasmic" evidence="11">
    <location>
        <begin position="1212"/>
        <end position="1217"/>
    </location>
</feature>
<feature type="transmembrane region" description="Helical; Name=S3 of repeat III" evidence="4">
    <location>
        <begin position="1218"/>
        <end position="1243"/>
    </location>
</feature>
<feature type="topological domain" description="Extracellular" evidence="11">
    <location>
        <begin position="1244"/>
        <end position="1252"/>
    </location>
</feature>
<feature type="transmembrane region" description="Helical; Name=S4 of repeat III" evidence="4">
    <location>
        <begin position="1253"/>
        <end position="1271"/>
    </location>
</feature>
<feature type="topological domain" description="Cytoplasmic" evidence="11">
    <location>
        <begin position="1272"/>
        <end position="1284"/>
    </location>
</feature>
<feature type="transmembrane region" description="Helical; Name=S5 of repeat III" evidence="4">
    <location>
        <begin position="1285"/>
        <end position="1307"/>
    </location>
</feature>
<feature type="topological domain" description="Extracellular" evidence="11">
    <location>
        <begin position="1308"/>
        <end position="1353"/>
    </location>
</feature>
<feature type="intramembrane region" description="Pore-forming" evidence="4">
    <location>
        <begin position="1354"/>
        <end position="1370"/>
    </location>
</feature>
<feature type="topological domain" description="Extracellular" evidence="11">
    <location>
        <begin position="1371"/>
        <end position="1393"/>
    </location>
</feature>
<feature type="transmembrane region" description="Helical; Name=S6 of repeat III" evidence="4">
    <location>
        <begin position="1394"/>
        <end position="1419"/>
    </location>
</feature>
<feature type="topological domain" description="Cytoplasmic" evidence="11">
    <location>
        <begin position="1420"/>
        <end position="1477"/>
    </location>
</feature>
<feature type="transmembrane region" description="Helical; Name=S1 of repeat IV" evidence="4">
    <location>
        <begin position="1478"/>
        <end position="1496"/>
    </location>
</feature>
<feature type="topological domain" description="Extracellular" evidence="11">
    <location>
        <begin position="1497"/>
        <end position="1504"/>
    </location>
</feature>
<feature type="transmembrane region" description="Helical; Name=S2 of repeat IV" evidence="4">
    <location>
        <begin position="1505"/>
        <end position="1528"/>
    </location>
</feature>
<feature type="topological domain" description="Cytoplasmic" evidence="11">
    <location>
        <begin position="1529"/>
        <end position="1538"/>
    </location>
</feature>
<feature type="transmembrane region" description="Helical; Name=S3 of repeat IV" evidence="4">
    <location>
        <begin position="1539"/>
        <end position="1556"/>
    </location>
</feature>
<feature type="topological domain" description="Extracellular" evidence="11">
    <location>
        <begin position="1557"/>
        <end position="1568"/>
    </location>
</feature>
<feature type="transmembrane region" description="Helical; Name=S4 of repeat IV" evidence="4">
    <location>
        <begin position="1569"/>
        <end position="1591"/>
    </location>
</feature>
<feature type="topological domain" description="Cytoplasmic" evidence="11">
    <location>
        <begin position="1592"/>
        <end position="1604"/>
    </location>
</feature>
<feature type="transmembrane region" description="Helical; Name=S5 of repeat IV" evidence="4">
    <location>
        <begin position="1605"/>
        <end position="1628"/>
    </location>
</feature>
<feature type="topological domain" description="Extracellular" evidence="11">
    <location>
        <begin position="1629"/>
        <end position="1650"/>
    </location>
</feature>
<feature type="intramembrane region" description="Pore-forming" evidence="4">
    <location>
        <begin position="1651"/>
        <end position="1663"/>
    </location>
</feature>
<feature type="topological domain" description="Extracellular" evidence="11">
    <location>
        <begin position="1664"/>
        <end position="1695"/>
    </location>
</feature>
<feature type="transmembrane region" description="Helical; Name=S6 of repeat IV" evidence="4">
    <location>
        <begin position="1696"/>
        <end position="1721"/>
    </location>
</feature>
<feature type="topological domain" description="Cytoplasmic" evidence="11">
    <location>
        <begin position="1722"/>
        <end position="1951"/>
    </location>
</feature>
<feature type="repeat" description="I" evidence="11">
    <location>
        <begin position="110"/>
        <end position="455"/>
    </location>
</feature>
<feature type="repeat" description="II" evidence="11">
    <location>
        <begin position="693"/>
        <end position="965"/>
    </location>
</feature>
<feature type="repeat" description="III" evidence="11">
    <location>
        <begin position="1139"/>
        <end position="1450"/>
    </location>
</feature>
<feature type="repeat" description="IV" evidence="11">
    <location>
        <begin position="1459"/>
        <end position="1757"/>
    </location>
</feature>
<feature type="domain" description="IQ">
    <location>
        <begin position="1851"/>
        <end position="1880"/>
    </location>
</feature>
<feature type="region of interest" description="Disordered" evidence="6">
    <location>
        <begin position="28"/>
        <end position="60"/>
    </location>
</feature>
<feature type="region of interest" description="Disordered" evidence="6">
    <location>
        <begin position="493"/>
        <end position="529"/>
    </location>
</feature>
<feature type="region of interest" description="Disordered" evidence="6">
    <location>
        <begin position="587"/>
        <end position="633"/>
    </location>
</feature>
<feature type="region of interest" description="Disordered" evidence="6">
    <location>
        <begin position="1068"/>
        <end position="1112"/>
    </location>
</feature>
<feature type="region of interest" description="Disordered" evidence="6">
    <location>
        <begin position="1898"/>
        <end position="1951"/>
    </location>
</feature>
<feature type="compositionally biased region" description="Basic and acidic residues" evidence="6">
    <location>
        <begin position="46"/>
        <end position="57"/>
    </location>
</feature>
<feature type="compositionally biased region" description="Basic residues" evidence="6">
    <location>
        <begin position="500"/>
        <end position="509"/>
    </location>
</feature>
<feature type="compositionally biased region" description="Basic and acidic residues" evidence="6">
    <location>
        <begin position="510"/>
        <end position="529"/>
    </location>
</feature>
<feature type="compositionally biased region" description="Basic and acidic residues" evidence="6">
    <location>
        <begin position="596"/>
        <end position="622"/>
    </location>
</feature>
<feature type="compositionally biased region" description="Basic and acidic residues" evidence="6">
    <location>
        <begin position="1925"/>
        <end position="1951"/>
    </location>
</feature>
<feature type="site" description="Important residue that permits the spider RTX-VII toxin to inhibit fast inactivation of the channel" evidence="9">
    <location>
        <position position="1503"/>
    </location>
</feature>
<feature type="site" description="Important residue that permits the spider RTX-VII toxin to inhibit fast inactivation of the channel" evidence="9">
    <location>
        <position position="1506"/>
    </location>
</feature>
<feature type="site" description="Important residue that permits the spider RTX-VII toxin to inhibit fast inactivation of the channel" evidence="9">
    <location>
        <position position="1507"/>
    </location>
</feature>
<feature type="site" description="Key residue that permits the spider beta/delta-theraphotoxin-Pre1a to inhibit fast inactivation of the channel" evidence="10">
    <location>
        <position position="1510"/>
    </location>
</feature>
<feature type="site" description="Important residue that permits the spider RTX-VII toxin to inhibit fast inactivation of the channel" evidence="9">
    <location>
        <position position="1562"/>
    </location>
</feature>
<feature type="modified residue" description="Phosphoserine" evidence="14">
    <location>
        <position position="484"/>
    </location>
</feature>
<feature type="modified residue" description="Phosphoserine" evidence="14">
    <location>
        <position position="485"/>
    </location>
</feature>
<feature type="modified residue" description="Phosphoserine" evidence="14">
    <location>
        <position position="486"/>
    </location>
</feature>
<feature type="modified residue" description="Phosphoserine; by PKC" evidence="3">
    <location>
        <position position="1452"/>
    </location>
</feature>
<feature type="glycosylation site" description="N-linked (GlcNAc...) asparagine" evidence="5">
    <location>
        <position position="211"/>
    </location>
</feature>
<feature type="glycosylation site" description="N-linked (GlcNAc...) asparagine" evidence="5">
    <location>
        <position position="290"/>
    </location>
</feature>
<feature type="glycosylation site" description="N-linked (GlcNAc...) asparagine" evidence="5">
    <location>
        <position position="296"/>
    </location>
</feature>
<feature type="glycosylation site" description="N-linked (GlcNAc...) asparagine" evidence="5">
    <location>
        <position position="302"/>
    </location>
</feature>
<feature type="glycosylation site" description="N-linked (GlcNAc...) asparagine" evidence="5">
    <location>
        <position position="307"/>
    </location>
</feature>
<feature type="glycosylation site" description="N-linked (GlcNAc...) asparagine" evidence="5">
    <location>
        <position position="339"/>
    </location>
</feature>
<feature type="glycosylation site" description="N-linked (GlcNAc...) asparagine" evidence="5">
    <location>
        <position position="1317"/>
    </location>
</feature>
<feature type="glycosylation site" description="N-linked (GlcNAc...) asparagine" evidence="5">
    <location>
        <position position="1331"/>
    </location>
</feature>
<feature type="disulfide bond" description="Interchain; with SCN2B or SCN4B" evidence="4">
    <location>
        <position position="862"/>
    </location>
</feature>
<feature type="disulfide bond" description="Interchain; with the conotoxin GVIIJ (when the channel is not linked to SCN2B or SCN4B; the bond to SCN2B or SCN4B protects the channel from the inhibition by toxin)" evidence="2">
    <location>
        <position position="862"/>
    </location>
</feature>
<feature type="disulfide bond" evidence="4">
    <location>
        <begin position="864"/>
        <end position="870"/>
    </location>
</feature>
<feature type="disulfide bond" evidence="4">
    <location>
        <begin position="902"/>
        <end position="911"/>
    </location>
</feature>
<feature type="disulfide bond" evidence="4">
    <location>
        <begin position="1315"/>
        <end position="1335"/>
    </location>
</feature>
<feature type="mutagenesis site" description="6-fold decrease in activity of the spider RTX-VII toxin." evidence="9">
    <original>K</original>
    <variation>P</variation>
    <location>
        <position position="1503"/>
    </location>
</feature>
<feature type="mutagenesis site" description="2-fold decrease in activity of the spider RTX-VII toxin." evidence="9">
    <original>Y</original>
    <variation>E</variation>
    <location>
        <position position="1504"/>
    </location>
</feature>
<feature type="mutagenesis site" description="4.5-fold decrease in activity of the spider RTX-VII toxin." evidence="9">
    <original>M</original>
    <variation>K</variation>
    <location>
        <position position="1505"/>
    </location>
</feature>
<feature type="mutagenesis site" description="10-fold decrease in activity of the spider RTX-VII toxin." evidence="9">
    <original>T</original>
    <variation>I</variation>
    <location>
        <position position="1506"/>
    </location>
</feature>
<feature type="mutagenesis site" description="12-fold decrease in activity of the spider RTX-VII toxin." evidence="9">
    <original>L</original>
    <variation>N</variation>
    <location>
        <position position="1507"/>
    </location>
</feature>
<feature type="mutagenesis site" description="Increase in sensitivity to the scorpion toxin BMK M1." evidence="7">
    <original>E</original>
    <variation>D</variation>
    <location>
        <position position="1559"/>
    </location>
</feature>
<feature type="mutagenesis site" description="5.5-fold decrease in activity of the spider RTX-VII toxin." evidence="9">
    <original>E</original>
    <variation>Q</variation>
    <location>
        <position position="1562"/>
    </location>
</feature>
<feature type="mutagenesis site" description="20-fold decrease in activity of the spider RTX-VII toxin." evidence="9">
    <original>E</original>
    <variation>R</variation>
    <location>
        <position position="1562"/>
    </location>
</feature>
<feature type="helix" evidence="15">
    <location>
        <begin position="161"/>
        <end position="174"/>
    </location>
</feature>
<comment type="function">
    <text evidence="1 9">Pore-forming subunit of Nav1.3, a voltage-gated sodium (Nav) channel that directly mediates the depolarizing phase of action potentials in excitable membranes. Navs, also called VGSCs (voltage-gated sodium channels) or VDSCs (voltage-dependent sodium channels), operate by switching between closed and open conformations depending on the voltage difference across the membrane. In the open conformation they allow Na(+) ions to selectively pass through the pore, along their electrochemical gradient. The influx of Na+ ions provokes membrane depolarization, initiating the propagation of electrical signals throughout cells and tissues (PubMed:25784299). In some secretory cell types, it also participates in cell excitability through membrane depolarization and regulates cells responsiveness to stimuli triggering secretion. For instance, it controls the release of serotonin/5-hydroxytryptamine by enterochromaffin cells and is required for both glucagon- and glucose-induced insulin secretion in pancreatic endocrine cells (By similarity).</text>
</comment>
<comment type="catalytic activity">
    <reaction evidence="12">
        <text>Na(+)(in) = Na(+)(out)</text>
        <dbReference type="Rhea" id="RHEA:34963"/>
        <dbReference type="ChEBI" id="CHEBI:29101"/>
    </reaction>
</comment>
<comment type="subunit">
    <text evidence="4 8 9 10">Heterooligomer of an alpha subunit, SCN3A, and 1 to 3 regulatory beta subunits including SCN1B and SCN2B; disulfide-linked with some beta subunits like SCN2B. Interacts with NEDD4L; could regulate expression of SCN3A at the plasma membrane through ubiquitination-regulated endocytosis (By similarity). Interacts with the conotoxin GVIIJ (PubMed:24497506). Interacts with the spider beta/delta-theraphotoxin-Pre1a (PubMed:25784299, PubMed:28428547). Interacts with the spider RTX-VII toxin (AC P0DL75) (PubMed:25784299).</text>
</comment>
<comment type="subcellular location">
    <subcellularLocation>
        <location evidence="4">Cell membrane</location>
        <topology evidence="4">Multi-pass membrane protein</topology>
    </subcellularLocation>
    <subcellularLocation>
        <location evidence="1">Basal cell membrane</location>
        <topology evidence="4">Multi-pass membrane protein</topology>
    </subcellularLocation>
    <text evidence="1">In enterochromaffin cells, localized highly asymmetrically, almost exclusively at the basal side.</text>
</comment>
<comment type="domain">
    <text evidence="11">The sequence contains 4 internal repeats, each with 5 hydrophobic segments (S1, S2, S3, S5, S6) and one positively charged segment (S4). Segments S4 are probably the voltage-sensors and are characterized by a series of positively charged amino acids at every third position.</text>
</comment>
<comment type="PTM">
    <text evidence="4">May be ubiquitinated by NEDD4L; which would promote its endocytosis.</text>
</comment>
<comment type="PTM">
    <text evidence="3">Phosphorylation at Ser-1452 by PKC in a highly conserved cytoplasmic loop slows inactivation of the sodium channel and reduces peak sodium currents.</text>
</comment>
<comment type="similarity">
    <text evidence="11">Belongs to the sodium channel (TC 1.A.1.10) family. Nav1.3/SCN3A subfamily.</text>
</comment>
<keyword id="KW-0002">3D-structure</keyword>
<keyword id="KW-1003">Cell membrane</keyword>
<keyword id="KW-1015">Disulfide bond</keyword>
<keyword id="KW-0325">Glycoprotein</keyword>
<keyword id="KW-0407">Ion channel</keyword>
<keyword id="KW-0406">Ion transport</keyword>
<keyword id="KW-0472">Membrane</keyword>
<keyword id="KW-0597">Phosphoprotein</keyword>
<keyword id="KW-1185">Reference proteome</keyword>
<keyword id="KW-0677">Repeat</keyword>
<keyword id="KW-0915">Sodium</keyword>
<keyword id="KW-0894">Sodium channel</keyword>
<keyword id="KW-0739">Sodium transport</keyword>
<keyword id="KW-0812">Transmembrane</keyword>
<keyword id="KW-1133">Transmembrane helix</keyword>
<keyword id="KW-0813">Transport</keyword>
<keyword id="KW-0832">Ubl conjugation</keyword>
<keyword id="KW-0851">Voltage-gated channel</keyword>
<proteinExistence type="evidence at protein level"/>
<sequence>MAQALLVPPGPESFRLFTRESLAAIEKRAAEEKAKKPKKEQDIDDENKPKPNSDLEAGKNLPFIYGDIPPEMVSEPLEDLDPYYVSKKTFVVLNKGKAIFRFSATSALYILTPLNPVRKIAIKILVHSLFSMLIMCTILTNCVFMTLSNPPDWTKNVEYTFTGIYTFESLIKILARGFCLEDFTFLRDPWNWLDFSVIVMAYVTEFVDLGNVSALRTFRVLRALKTISVIPGLKTIVGALIQSVKKLSDVMILTVFCLSVFALIGLQLFMGNLRNKCSQWPPSDSAFETNTTSYFNGTMDSNGTFVNVTMSTFNWKDYIADDSHFYVLDGQKDPLLCGNGSDAGQCPEGYICVKAGRNPNYGYTSFDTFSWAFLSLFRLMTQDYWENLYQLTLRAAGKTYMIFFVLVIFLGSFYLVNLILAVVAMAYEEQNQATLEEAEQKEAEFQQMLEQLKKQQEEAQAVAAASAASRDFSGIGGLGELLESSSEASKLSSKSAKEWRNRRKKRRQREHLEGNHRADGDRFPKSESEDSVKRRSFLLSLDGNPLTGDKKLCSPHQSLLSIRGSLFSPRRNSKTSIFSFRGRAKDVGSENDFADDEHSTFEDSESRRDSLFVPHRPGERRNSNGTTTETEVRKRRLSSYQISMEMLEDSSGRQRSMSIASILTNTMEELEESRQKCPPCWYRFANVFLIWDCCDAWLKVKHLVNLIVMDPFVDLAITICIVLNTLFMAMEHYPMTQQFSSVLTVGNLVFTGIFTAEMVLKIIAMDPYYYFQEGWNIFDGIIVSLSLMELGLANVEGLSVLRSFRLLRVFKLAKSWPTLNMLIKIIGNSVGALGNLTLVLAIIVFIFAVVGMQLFGKSYKECVCKINVDCKLPRWHMNDFFHSFLIVFRVLCGEWIETMWDCMEVAGQTMCLIVFMLVMVIGNLVVLNLFLALLLSSFSSDNLAATDDDNEMNNLQIAVGRMQKGIDFVKNKIRECFRKAFFRKPKVIEIQEGNKIDSCMSNNTGIEISKELNYLKDGNGTTSGVGTGSSVEKYVIDENDYMSFINNPSLTVTVPIAVGESDFENLNTEEFSSESELEESKEKLNATSSSEGSTVDVAPPREGEQAEIEPEEDLKPEACFTEGCIKKFPFCQVSTEEGKGKIWWNLRKTCYSIVEHNWFETFIVFMILLSSGALAFEDIYIEQRKTIKTMLEYADKVFTYIFILEMLLKWVAYGFQTYFTNAWCWLDFLIVDVSLVSLVANALGYSELGAIKSLRTLRALRPLRALSRFEGMRVVVNALVGAIPSIMNVLLVCLIFWLIFSIMGVNLFAGKFYHCVNTTTGNMFEIKEVNNFSDCQALGKQARWKNVKVNFDNVGAGYLALLQVATFKGWMDIMYAAVDSRDVKLQPIYEENLYMYLYFVIFIIFGSFFTLNLFIGVIIDNFNQQKKKFGGQDIFMTEEQKKYYNAMKKLGSKKPQKPIPRPANKFQGMVFDFVTRQVFDISIMILICLNMVTMMVETDDQSKYMTLVLSRINLVFIVLFTGEFLLKLISLRYYYFTIGWNIFDFVVVILSIVGMFLAELIEKYFVSPTLFRVIRLARIGRILRLIKGAKGIRTLLFALMMSLPALFNIGLLLFLVMFIYAIFGMSNFAYVKKEAGIDDMFNFETFGNSMICLFQITTSAGWDGLLAPILNSAPPDCDPDAIHPGSSVKGDCGNPSVGIFFFVSYIIISFLVVVNMYIAVILENFSVATEESAEPLSEDDFEMFYEVWEKFDPDATQFIEFCKLSDFAAALDPPLLIAKPNKVQLIAMDLPMVSGDRIHCLDILFAFTKRVLGESGEMDALRIQMEDRFMASNPSKVSYEPITTTLKRKQEEVSAAIIQRNYRCYLLKQRLKNISSKYDKETIKGRIDLPIKGDMVIDKLNGNSTPEKTDGSSSTTSPPSYDSVTKPDKEKFEKDKPEKEIKGKEVRENQK</sequence>
<protein>
    <recommendedName>
        <fullName evidence="11">Sodium channel protein type 3 subunit alpha</fullName>
    </recommendedName>
    <alternativeName>
        <fullName>Sodium channel protein brain III subunit alpha</fullName>
    </alternativeName>
    <alternativeName>
        <fullName>Sodium channel protein type III subunit alpha</fullName>
    </alternativeName>
    <alternativeName>
        <fullName>Voltage-gated sodium channel subtype III</fullName>
    </alternativeName>
    <alternativeName>
        <fullName>Voltage-gated sodium channel subunit alpha Nav1.3</fullName>
    </alternativeName>
</protein>
<evidence type="ECO:0000250" key="1">
    <source>
        <dbReference type="UniProtKB" id="A2ASI5"/>
    </source>
</evidence>
<evidence type="ECO:0000250" key="2">
    <source>
        <dbReference type="UniProtKB" id="P04775"/>
    </source>
</evidence>
<evidence type="ECO:0000250" key="3">
    <source>
        <dbReference type="UniProtKB" id="Q14524"/>
    </source>
</evidence>
<evidence type="ECO:0000250" key="4">
    <source>
        <dbReference type="UniProtKB" id="Q9NY46"/>
    </source>
</evidence>
<evidence type="ECO:0000255" key="5"/>
<evidence type="ECO:0000256" key="6">
    <source>
        <dbReference type="SAM" id="MobiDB-lite"/>
    </source>
</evidence>
<evidence type="ECO:0000269" key="7">
    <source>
    </source>
</evidence>
<evidence type="ECO:0000269" key="8">
    <source>
    </source>
</evidence>
<evidence type="ECO:0000269" key="9">
    <source>
    </source>
</evidence>
<evidence type="ECO:0000269" key="10">
    <source>
    </source>
</evidence>
<evidence type="ECO:0000305" key="11"/>
<evidence type="ECO:0000305" key="12">
    <source>
    </source>
</evidence>
<evidence type="ECO:0000312" key="13">
    <source>
        <dbReference type="RGD" id="3635"/>
    </source>
</evidence>
<evidence type="ECO:0007744" key="14">
    <source>
    </source>
</evidence>
<evidence type="ECO:0007829" key="15">
    <source>
        <dbReference type="PDB" id="1QG9"/>
    </source>
</evidence>
<accession>P08104</accession>
<dbReference type="EMBL" id="Y00766">
    <property type="protein sequence ID" value="CAA68735.1"/>
    <property type="molecule type" value="mRNA"/>
</dbReference>
<dbReference type="PIR" id="S00320">
    <property type="entry name" value="S00320"/>
</dbReference>
<dbReference type="RefSeq" id="NP_037251.1">
    <property type="nucleotide sequence ID" value="NM_013119.1"/>
</dbReference>
<dbReference type="PDB" id="1QG9">
    <property type="method" value="NMR"/>
    <property type="chains" value="A=156-176"/>
</dbReference>
<dbReference type="PDBsum" id="1QG9"/>
<dbReference type="BMRB" id="P08104"/>
<dbReference type="SMR" id="P08104"/>
<dbReference type="BioGRID" id="269080">
    <property type="interactions" value="4"/>
</dbReference>
<dbReference type="CORUM" id="P08104"/>
<dbReference type="FunCoup" id="P08104">
    <property type="interactions" value="2461"/>
</dbReference>
<dbReference type="STRING" id="10116.ENSRNOP00000006646"/>
<dbReference type="BindingDB" id="P08104"/>
<dbReference type="ChEMBL" id="CHEMBL4966"/>
<dbReference type="DrugCentral" id="P08104"/>
<dbReference type="GuidetoPHARMACOLOGY" id="580"/>
<dbReference type="TCDB" id="1.A.1.10.1">
    <property type="family name" value="the voltage-gated ion channel (vic) superfamily"/>
</dbReference>
<dbReference type="GlyCosmos" id="P08104">
    <property type="glycosylation" value="8 sites, No reported glycans"/>
</dbReference>
<dbReference type="GlyGen" id="P08104">
    <property type="glycosylation" value="8 sites"/>
</dbReference>
<dbReference type="iPTMnet" id="P08104"/>
<dbReference type="PhosphoSitePlus" id="P08104"/>
<dbReference type="SwissPalm" id="P08104"/>
<dbReference type="PaxDb" id="10116-ENSRNOP00000006646"/>
<dbReference type="GeneID" id="497770"/>
<dbReference type="KEGG" id="rno:497770"/>
<dbReference type="AGR" id="RGD:3635"/>
<dbReference type="CTD" id="6328"/>
<dbReference type="RGD" id="3635">
    <property type="gene designation" value="Scn3a"/>
</dbReference>
<dbReference type="eggNOG" id="KOG2301">
    <property type="taxonomic scope" value="Eukaryota"/>
</dbReference>
<dbReference type="InParanoid" id="P08104"/>
<dbReference type="PhylomeDB" id="P08104"/>
<dbReference type="EvolutionaryTrace" id="P08104"/>
<dbReference type="PRO" id="PR:P08104"/>
<dbReference type="Proteomes" id="UP000002494">
    <property type="component" value="Unplaced"/>
</dbReference>
<dbReference type="GO" id="GO:0030424">
    <property type="term" value="C:axon"/>
    <property type="evidence" value="ECO:0000314"/>
    <property type="project" value="RGD"/>
</dbReference>
<dbReference type="GO" id="GO:0009925">
    <property type="term" value="C:basal plasma membrane"/>
    <property type="evidence" value="ECO:0007669"/>
    <property type="project" value="UniProtKB-SubCell"/>
</dbReference>
<dbReference type="GO" id="GO:0016020">
    <property type="term" value="C:membrane"/>
    <property type="evidence" value="ECO:0000266"/>
    <property type="project" value="RGD"/>
</dbReference>
<dbReference type="GO" id="GO:0043025">
    <property type="term" value="C:neuronal cell body"/>
    <property type="evidence" value="ECO:0000314"/>
    <property type="project" value="RGD"/>
</dbReference>
<dbReference type="GO" id="GO:0005886">
    <property type="term" value="C:plasma membrane"/>
    <property type="evidence" value="ECO:0000266"/>
    <property type="project" value="RGD"/>
</dbReference>
<dbReference type="GO" id="GO:0016528">
    <property type="term" value="C:sarcoplasm"/>
    <property type="evidence" value="ECO:0000266"/>
    <property type="project" value="RGD"/>
</dbReference>
<dbReference type="GO" id="GO:0001518">
    <property type="term" value="C:voltage-gated sodium channel complex"/>
    <property type="evidence" value="ECO:0000266"/>
    <property type="project" value="RGD"/>
</dbReference>
<dbReference type="GO" id="GO:0005516">
    <property type="term" value="F:calmodulin binding"/>
    <property type="evidence" value="ECO:0000314"/>
    <property type="project" value="RGD"/>
</dbReference>
<dbReference type="GO" id="GO:0005248">
    <property type="term" value="F:voltage-gated sodium channel activity"/>
    <property type="evidence" value="ECO:0000266"/>
    <property type="project" value="RGD"/>
</dbReference>
<dbReference type="GO" id="GO:0048266">
    <property type="term" value="P:behavioral response to pain"/>
    <property type="evidence" value="ECO:0000266"/>
    <property type="project" value="RGD"/>
</dbReference>
<dbReference type="GO" id="GO:0071236">
    <property type="term" value="P:cellular response to antibiotic"/>
    <property type="evidence" value="ECO:0000314"/>
    <property type="project" value="RGD"/>
</dbReference>
<dbReference type="GO" id="GO:0086010">
    <property type="term" value="P:membrane depolarization during action potential"/>
    <property type="evidence" value="ECO:0000266"/>
    <property type="project" value="RGD"/>
</dbReference>
<dbReference type="GO" id="GO:0007399">
    <property type="term" value="P:nervous system development"/>
    <property type="evidence" value="ECO:0000270"/>
    <property type="project" value="RGD"/>
</dbReference>
<dbReference type="GO" id="GO:0019228">
    <property type="term" value="P:neuronal action potential"/>
    <property type="evidence" value="ECO:0000318"/>
    <property type="project" value="GO_Central"/>
</dbReference>
<dbReference type="GO" id="GO:0046684">
    <property type="term" value="P:response to pyrethroid"/>
    <property type="evidence" value="ECO:0000314"/>
    <property type="project" value="RGD"/>
</dbReference>
<dbReference type="CDD" id="cd13433">
    <property type="entry name" value="Na_channel_gate"/>
    <property type="match status" value="1"/>
</dbReference>
<dbReference type="FunFam" id="1.10.238.10:FF:000002">
    <property type="entry name" value="Sodium channel protein"/>
    <property type="match status" value="1"/>
</dbReference>
<dbReference type="FunFam" id="1.10.287.70:FF:000001">
    <property type="entry name" value="Sodium channel protein"/>
    <property type="match status" value="1"/>
</dbReference>
<dbReference type="FunFam" id="1.10.287.70:FF:000003">
    <property type="entry name" value="Sodium channel protein"/>
    <property type="match status" value="1"/>
</dbReference>
<dbReference type="FunFam" id="1.10.287.70:FF:000006">
    <property type="entry name" value="Sodium channel protein"/>
    <property type="match status" value="1"/>
</dbReference>
<dbReference type="FunFam" id="1.20.120.350:FF:000002">
    <property type="entry name" value="Sodium channel protein"/>
    <property type="match status" value="1"/>
</dbReference>
<dbReference type="FunFam" id="1.20.120.350:FF:000004">
    <property type="entry name" value="Sodium channel protein"/>
    <property type="match status" value="1"/>
</dbReference>
<dbReference type="FunFam" id="1.20.120.350:FF:000005">
    <property type="entry name" value="Sodium channel protein"/>
    <property type="match status" value="1"/>
</dbReference>
<dbReference type="FunFam" id="1.20.5.1190:FF:000001">
    <property type="entry name" value="Sodium channel protein"/>
    <property type="match status" value="1"/>
</dbReference>
<dbReference type="FunFam" id="1.20.120.350:FF:000003">
    <property type="entry name" value="Voltage-dependent sodium channel"/>
    <property type="match status" value="1"/>
</dbReference>
<dbReference type="Gene3D" id="1.10.287.70">
    <property type="match status" value="4"/>
</dbReference>
<dbReference type="Gene3D" id="1.10.238.10">
    <property type="entry name" value="EF-hand"/>
    <property type="match status" value="1"/>
</dbReference>
<dbReference type="Gene3D" id="1.20.5.1190">
    <property type="entry name" value="iswi atpase"/>
    <property type="match status" value="1"/>
</dbReference>
<dbReference type="Gene3D" id="1.20.120.350">
    <property type="entry name" value="Voltage-gated potassium channels. Chain C"/>
    <property type="match status" value="4"/>
</dbReference>
<dbReference type="InterPro" id="IPR005821">
    <property type="entry name" value="Ion_trans_dom"/>
</dbReference>
<dbReference type="InterPro" id="IPR001696">
    <property type="entry name" value="Na_channel_asu"/>
</dbReference>
<dbReference type="InterPro" id="IPR044564">
    <property type="entry name" value="Na_chnl_inactivation_gate"/>
</dbReference>
<dbReference type="InterPro" id="IPR010526">
    <property type="entry name" value="Na_trans_assoc_dom"/>
</dbReference>
<dbReference type="InterPro" id="IPR024583">
    <property type="entry name" value="Na_trans_cytopl"/>
</dbReference>
<dbReference type="InterPro" id="IPR043203">
    <property type="entry name" value="VGCC_Ca_Na"/>
</dbReference>
<dbReference type="InterPro" id="IPR027359">
    <property type="entry name" value="Volt_channel_dom_sf"/>
</dbReference>
<dbReference type="PANTHER" id="PTHR10037:SF237">
    <property type="entry name" value="SODIUM CHANNEL PROTEIN TYPE 3 SUBUNIT ALPHA"/>
    <property type="match status" value="1"/>
</dbReference>
<dbReference type="PANTHER" id="PTHR10037">
    <property type="entry name" value="VOLTAGE-GATED CATION CHANNEL CALCIUM AND SODIUM"/>
    <property type="match status" value="1"/>
</dbReference>
<dbReference type="Pfam" id="PF00520">
    <property type="entry name" value="Ion_trans"/>
    <property type="match status" value="4"/>
</dbReference>
<dbReference type="Pfam" id="PF24609">
    <property type="entry name" value="IQ_SCN5A_C"/>
    <property type="match status" value="1"/>
</dbReference>
<dbReference type="Pfam" id="PF06512">
    <property type="entry name" value="Na_trans_assoc"/>
    <property type="match status" value="1"/>
</dbReference>
<dbReference type="Pfam" id="PF11933">
    <property type="entry name" value="Na_trans_cytopl"/>
    <property type="match status" value="1"/>
</dbReference>
<dbReference type="PRINTS" id="PR00170">
    <property type="entry name" value="NACHANNEL"/>
</dbReference>
<dbReference type="SUPFAM" id="SSF81324">
    <property type="entry name" value="Voltage-gated potassium channels"/>
    <property type="match status" value="4"/>
</dbReference>
<organism>
    <name type="scientific">Rattus norvegicus</name>
    <name type="common">Rat</name>
    <dbReference type="NCBI Taxonomy" id="10116"/>
    <lineage>
        <taxon>Eukaryota</taxon>
        <taxon>Metazoa</taxon>
        <taxon>Chordata</taxon>
        <taxon>Craniata</taxon>
        <taxon>Vertebrata</taxon>
        <taxon>Euteleostomi</taxon>
        <taxon>Mammalia</taxon>
        <taxon>Eutheria</taxon>
        <taxon>Euarchontoglires</taxon>
        <taxon>Glires</taxon>
        <taxon>Rodentia</taxon>
        <taxon>Myomorpha</taxon>
        <taxon>Muroidea</taxon>
        <taxon>Muridae</taxon>
        <taxon>Murinae</taxon>
        <taxon>Rattus</taxon>
    </lineage>
</organism>
<name>SCN3A_RAT</name>